<organism>
    <name type="scientific">Haemophilus influenzae (strain ATCC 51907 / DSM 11121 / KW20 / Rd)</name>
    <dbReference type="NCBI Taxonomy" id="71421"/>
    <lineage>
        <taxon>Bacteria</taxon>
        <taxon>Pseudomonadati</taxon>
        <taxon>Pseudomonadota</taxon>
        <taxon>Gammaproteobacteria</taxon>
        <taxon>Pasteurellales</taxon>
        <taxon>Pasteurellaceae</taxon>
        <taxon>Haemophilus</taxon>
    </lineage>
</organism>
<comment type="similarity">
    <text evidence="1">Belongs to the thioesterase PaaI family.</text>
</comment>
<reference key="1">
    <citation type="journal article" date="1995" name="Science">
        <title>Whole-genome random sequencing and assembly of Haemophilus influenzae Rd.</title>
        <authorList>
            <person name="Fleischmann R.D."/>
            <person name="Adams M.D."/>
            <person name="White O."/>
            <person name="Clayton R.A."/>
            <person name="Kirkness E.F."/>
            <person name="Kerlavage A.R."/>
            <person name="Bult C.J."/>
            <person name="Tomb J.-F."/>
            <person name="Dougherty B.A."/>
            <person name="Merrick J.M."/>
            <person name="McKenney K."/>
            <person name="Sutton G.G."/>
            <person name="FitzHugh W."/>
            <person name="Fields C.A."/>
            <person name="Gocayne J.D."/>
            <person name="Scott J.D."/>
            <person name="Shirley R."/>
            <person name="Liu L.-I."/>
            <person name="Glodek A."/>
            <person name="Kelley J.M."/>
            <person name="Weidman J.F."/>
            <person name="Phillips C.A."/>
            <person name="Spriggs T."/>
            <person name="Hedblom E."/>
            <person name="Cotton M.D."/>
            <person name="Utterback T.R."/>
            <person name="Hanna M.C."/>
            <person name="Nguyen D.T."/>
            <person name="Saudek D.M."/>
            <person name="Brandon R.C."/>
            <person name="Fine L.D."/>
            <person name="Fritchman J.L."/>
            <person name="Fuhrmann J.L."/>
            <person name="Geoghagen N.S.M."/>
            <person name="Gnehm C.L."/>
            <person name="McDonald L.A."/>
            <person name="Small K.V."/>
            <person name="Fraser C.M."/>
            <person name="Smith H.O."/>
            <person name="Venter J.C."/>
        </authorList>
    </citation>
    <scope>NUCLEOTIDE SEQUENCE [LARGE SCALE GENOMIC DNA]</scope>
    <source>
        <strain>ATCC 51907 / DSM 11121 / KW20 / Rd</strain>
    </source>
</reference>
<reference key="2">
    <citation type="submission" date="2009-02" db="PDB data bank">
        <title>X-ray structure of YB61_HAEIN northeast structural genomics consortium target IR63.</title>
        <authorList>
            <consortium name="Northeast structural genomics consortium (NESG)"/>
        </authorList>
    </citation>
    <scope>X-RAY CRYSTALLOGRAPHY (1.7 ANGSTROMS)</scope>
</reference>
<name>Y1161_HAEIN</name>
<evidence type="ECO:0000305" key="1"/>
<evidence type="ECO:0007829" key="2">
    <source>
        <dbReference type="PDB" id="1SC0"/>
    </source>
</evidence>
<gene>
    <name type="ordered locus">HI_1161</name>
</gene>
<dbReference type="EC" id="3.1.2.-"/>
<dbReference type="EMBL" id="L42023">
    <property type="protein sequence ID" value="AAC22816.1"/>
    <property type="molecule type" value="Genomic_DNA"/>
</dbReference>
<dbReference type="PIR" id="A64187">
    <property type="entry name" value="A64187"/>
</dbReference>
<dbReference type="RefSeq" id="NP_439319.1">
    <property type="nucleotide sequence ID" value="NC_000907.1"/>
</dbReference>
<dbReference type="PDB" id="1SC0">
    <property type="method" value="X-ray"/>
    <property type="resolution" value="1.70 A"/>
    <property type="chains" value="A/B=1-138"/>
</dbReference>
<dbReference type="PDB" id="2B6E">
    <property type="method" value="X-ray"/>
    <property type="resolution" value="1.90 A"/>
    <property type="chains" value="A/B/C/D/E/F/G/H=1-138"/>
</dbReference>
<dbReference type="PDB" id="3LZ7">
    <property type="method" value="X-ray"/>
    <property type="resolution" value="2.19 A"/>
    <property type="chains" value="A/B/C/D=1-138"/>
</dbReference>
<dbReference type="PDBsum" id="1SC0"/>
<dbReference type="PDBsum" id="2B6E"/>
<dbReference type="PDBsum" id="3LZ7"/>
<dbReference type="SMR" id="P45083"/>
<dbReference type="STRING" id="71421.HI_1161"/>
<dbReference type="EnsemblBacteria" id="AAC22816">
    <property type="protein sequence ID" value="AAC22816"/>
    <property type="gene ID" value="HI_1161"/>
</dbReference>
<dbReference type="KEGG" id="hin:HI_1161"/>
<dbReference type="PATRIC" id="fig|71421.8.peg.1213"/>
<dbReference type="eggNOG" id="COG2050">
    <property type="taxonomic scope" value="Bacteria"/>
</dbReference>
<dbReference type="HOGENOM" id="CLU_089876_13_1_6"/>
<dbReference type="OrthoDB" id="9798208at2"/>
<dbReference type="PhylomeDB" id="P45083"/>
<dbReference type="BioCyc" id="HINF71421:G1GJ1-1195-MONOMER"/>
<dbReference type="EvolutionaryTrace" id="P45083"/>
<dbReference type="Proteomes" id="UP000000579">
    <property type="component" value="Chromosome"/>
</dbReference>
<dbReference type="GO" id="GO:0005829">
    <property type="term" value="C:cytosol"/>
    <property type="evidence" value="ECO:0000318"/>
    <property type="project" value="GO_Central"/>
</dbReference>
<dbReference type="GO" id="GO:0061522">
    <property type="term" value="F:1,4-dihydroxy-2-naphthoyl-CoA thioesterase activity"/>
    <property type="evidence" value="ECO:0000318"/>
    <property type="project" value="GO_Central"/>
</dbReference>
<dbReference type="CDD" id="cd03443">
    <property type="entry name" value="PaaI_thioesterase"/>
    <property type="match status" value="1"/>
</dbReference>
<dbReference type="FunFam" id="3.10.129.10:FF:000002">
    <property type="entry name" value="1,4-dihydroxy-2-naphthoyl-CoA hydrolase"/>
    <property type="match status" value="1"/>
</dbReference>
<dbReference type="Gene3D" id="3.10.129.10">
    <property type="entry name" value="Hotdog Thioesterase"/>
    <property type="match status" value="1"/>
</dbReference>
<dbReference type="InterPro" id="IPR029069">
    <property type="entry name" value="HotDog_dom_sf"/>
</dbReference>
<dbReference type="InterPro" id="IPR003736">
    <property type="entry name" value="PAAI_dom"/>
</dbReference>
<dbReference type="InterPro" id="IPR006683">
    <property type="entry name" value="Thioestr_dom"/>
</dbReference>
<dbReference type="NCBIfam" id="TIGR00369">
    <property type="entry name" value="unchar_dom_1"/>
    <property type="match status" value="1"/>
</dbReference>
<dbReference type="PANTHER" id="PTHR43240">
    <property type="entry name" value="1,4-DIHYDROXY-2-NAPHTHOYL-COA THIOESTERASE 1"/>
    <property type="match status" value="1"/>
</dbReference>
<dbReference type="PANTHER" id="PTHR43240:SF5">
    <property type="entry name" value="1,4-DIHYDROXY-2-NAPHTHOYL-COA THIOESTERASE 1"/>
    <property type="match status" value="1"/>
</dbReference>
<dbReference type="Pfam" id="PF03061">
    <property type="entry name" value="4HBT"/>
    <property type="match status" value="1"/>
</dbReference>
<dbReference type="SUPFAM" id="SSF54637">
    <property type="entry name" value="Thioesterase/thiol ester dehydrase-isomerase"/>
    <property type="match status" value="1"/>
</dbReference>
<proteinExistence type="evidence at protein level"/>
<keyword id="KW-0002">3D-structure</keyword>
<keyword id="KW-0378">Hydrolase</keyword>
<keyword id="KW-1185">Reference proteome</keyword>
<protein>
    <recommendedName>
        <fullName>Putative esterase HI_1161</fullName>
        <ecNumber>3.1.2.-</ecNumber>
    </recommendedName>
</protein>
<sequence>MLWKKTFTLENLNQLCSNSAVSHLGIEISAFGEDWIEATMPVDHRTMQPFGVLHGGVSVALAETIGSLAGSLCLEEGKTVVGLDINANHLRPVRSGKVTARATPINLGRNIQVWQIDIRTEENKLCCVSRLTLSVINL</sequence>
<accession>P45083</accession>
<feature type="chain" id="PRO_0000156682" description="Putative esterase HI_1161">
    <location>
        <begin position="1"/>
        <end position="138"/>
    </location>
</feature>
<feature type="helix" evidence="2">
    <location>
        <begin position="9"/>
        <end position="15"/>
    </location>
</feature>
<feature type="helix" evidence="2">
    <location>
        <begin position="20"/>
        <end position="23"/>
    </location>
</feature>
<feature type="strand" evidence="2">
    <location>
        <begin position="27"/>
        <end position="31"/>
    </location>
</feature>
<feature type="strand" evidence="2">
    <location>
        <begin position="36"/>
        <end position="41"/>
    </location>
</feature>
<feature type="turn" evidence="2">
    <location>
        <begin position="44"/>
        <end position="46"/>
    </location>
</feature>
<feature type="strand" evidence="2">
    <location>
        <begin position="51"/>
        <end position="53"/>
    </location>
</feature>
<feature type="helix" evidence="2">
    <location>
        <begin position="55"/>
        <end position="72"/>
    </location>
</feature>
<feature type="strand" evidence="2">
    <location>
        <begin position="79"/>
        <end position="89"/>
    </location>
</feature>
<feature type="strand" evidence="2">
    <location>
        <begin position="95"/>
        <end position="107"/>
    </location>
</feature>
<feature type="strand" evidence="2">
    <location>
        <begin position="109"/>
        <end position="119"/>
    </location>
</feature>
<feature type="strand" evidence="2">
    <location>
        <begin position="125"/>
        <end position="136"/>
    </location>
</feature>